<keyword id="KW-0007">Acetylation</keyword>
<keyword id="KW-0903">Direct protein sequencing</keyword>
<keyword id="KW-0349">Heme</keyword>
<keyword id="KW-0408">Iron</keyword>
<keyword id="KW-0479">Metal-binding</keyword>
<keyword id="KW-0561">Oxygen transport</keyword>
<keyword id="KW-0597">Phosphoprotein</keyword>
<keyword id="KW-1185">Reference proteome</keyword>
<keyword id="KW-0813">Transport</keyword>
<evidence type="ECO:0000250" key="1">
    <source>
        <dbReference type="UniProtKB" id="P01942"/>
    </source>
</evidence>
<evidence type="ECO:0000250" key="2">
    <source>
        <dbReference type="UniProtKB" id="P01946"/>
    </source>
</evidence>
<evidence type="ECO:0000250" key="3">
    <source>
        <dbReference type="UniProtKB" id="P69905"/>
    </source>
</evidence>
<evidence type="ECO:0000255" key="4">
    <source>
        <dbReference type="PROSITE-ProRule" id="PRU00238"/>
    </source>
</evidence>
<organism>
    <name type="scientific">Physeter macrocephalus</name>
    <name type="common">Sperm whale</name>
    <name type="synonym">Physeter catodon</name>
    <dbReference type="NCBI Taxonomy" id="9755"/>
    <lineage>
        <taxon>Eukaryota</taxon>
        <taxon>Metazoa</taxon>
        <taxon>Chordata</taxon>
        <taxon>Craniata</taxon>
        <taxon>Vertebrata</taxon>
        <taxon>Euteleostomi</taxon>
        <taxon>Mammalia</taxon>
        <taxon>Eutheria</taxon>
        <taxon>Laurasiatheria</taxon>
        <taxon>Artiodactyla</taxon>
        <taxon>Whippomorpha</taxon>
        <taxon>Cetacea</taxon>
        <taxon>Odontoceti</taxon>
        <taxon>Physeteridae</taxon>
        <taxon>Physeter</taxon>
    </lineage>
</organism>
<feature type="chain" id="PRO_0000052730" description="Hemoglobin subunit alpha">
    <location>
        <begin position="1"/>
        <end position="141"/>
    </location>
</feature>
<feature type="peptide" id="PRO_0000455925" description="Hemopressin" evidence="2">
    <location>
        <begin position="95"/>
        <end position="103"/>
    </location>
</feature>
<feature type="domain" description="Globin" evidence="4">
    <location>
        <begin position="1"/>
        <end position="141"/>
    </location>
</feature>
<feature type="binding site" evidence="4">
    <location>
        <position position="58"/>
    </location>
    <ligand>
        <name>O2</name>
        <dbReference type="ChEBI" id="CHEBI:15379"/>
    </ligand>
</feature>
<feature type="binding site" description="proximal binding residue" evidence="4">
    <location>
        <position position="87"/>
    </location>
    <ligand>
        <name>heme b</name>
        <dbReference type="ChEBI" id="CHEBI:60344"/>
    </ligand>
    <ligandPart>
        <name>Fe</name>
        <dbReference type="ChEBI" id="CHEBI:18248"/>
    </ligandPart>
</feature>
<feature type="modified residue" description="Phosphoserine" evidence="3">
    <location>
        <position position="3"/>
    </location>
</feature>
<feature type="modified residue" description="N6-succinyllysine" evidence="1">
    <location>
        <position position="7"/>
    </location>
</feature>
<feature type="modified residue" description="Phosphothreonine" evidence="3">
    <location>
        <position position="8"/>
    </location>
</feature>
<feature type="modified residue" description="N6-succinyllysine" evidence="1">
    <location>
        <position position="11"/>
    </location>
</feature>
<feature type="modified residue" description="N6-acetyllysine; alternate" evidence="3">
    <location>
        <position position="16"/>
    </location>
</feature>
<feature type="modified residue" description="N6-succinyllysine; alternate" evidence="1">
    <location>
        <position position="16"/>
    </location>
</feature>
<feature type="modified residue" description="Phosphoserine" evidence="3">
    <location>
        <position position="35"/>
    </location>
</feature>
<feature type="modified residue" description="N6-succinyllysine" evidence="1">
    <location>
        <position position="40"/>
    </location>
</feature>
<feature type="modified residue" description="Phosphoserine" evidence="1">
    <location>
        <position position="102"/>
    </location>
</feature>
<feature type="modified residue" description="Phosphothreonine" evidence="1">
    <location>
        <position position="108"/>
    </location>
</feature>
<feature type="modified residue" description="Phosphoserine" evidence="1">
    <location>
        <position position="124"/>
    </location>
</feature>
<feature type="modified residue" description="Phosphoserine" evidence="1">
    <location>
        <position position="131"/>
    </location>
</feature>
<feature type="modified residue" description="Phosphothreonine" evidence="1">
    <location>
        <position position="134"/>
    </location>
</feature>
<feature type="modified residue" description="Phosphothreonine" evidence="1">
    <location>
        <position position="137"/>
    </location>
</feature>
<feature type="modified residue" description="Phosphoserine" evidence="1">
    <location>
        <position position="138"/>
    </location>
</feature>
<feature type="sequence variant">
    <original>V</original>
    <variation>I</variation>
    <location>
        <position position="10"/>
    </location>
</feature>
<feature type="sequence variant">
    <original>N</original>
    <variation>S</variation>
    <location>
        <position position="19"/>
    </location>
</feature>
<accession>P09904</accession>
<reference key="1">
    <citation type="journal article" date="1986" name="Biol. Chem. Hoppe-Seyler">
        <title>The primary structure of sperm whale hemoglobin (Physeter catodon, cetacea).</title>
        <authorList>
            <person name="Abbasi A."/>
            <person name="Braunitzer G."/>
            <person name="Matsuda G."/>
            <person name="Maita T."/>
        </authorList>
    </citation>
    <scope>PROTEIN SEQUENCE</scope>
</reference>
<dbReference type="PIR" id="A25728">
    <property type="entry name" value="A25728"/>
</dbReference>
<dbReference type="SMR" id="P09904"/>
<dbReference type="FunCoup" id="P09904">
    <property type="interactions" value="62"/>
</dbReference>
<dbReference type="STRING" id="9755.ENSPCTP00005019506"/>
<dbReference type="InParanoid" id="P09904"/>
<dbReference type="Proteomes" id="UP000248484">
    <property type="component" value="Unplaced"/>
</dbReference>
<dbReference type="GO" id="GO:0072562">
    <property type="term" value="C:blood microparticle"/>
    <property type="evidence" value="ECO:0007669"/>
    <property type="project" value="TreeGrafter"/>
</dbReference>
<dbReference type="GO" id="GO:0031838">
    <property type="term" value="C:haptoglobin-hemoglobin complex"/>
    <property type="evidence" value="ECO:0007669"/>
    <property type="project" value="TreeGrafter"/>
</dbReference>
<dbReference type="GO" id="GO:0005833">
    <property type="term" value="C:hemoglobin complex"/>
    <property type="evidence" value="ECO:0007669"/>
    <property type="project" value="InterPro"/>
</dbReference>
<dbReference type="GO" id="GO:0031720">
    <property type="term" value="F:haptoglobin binding"/>
    <property type="evidence" value="ECO:0007669"/>
    <property type="project" value="TreeGrafter"/>
</dbReference>
<dbReference type="GO" id="GO:0020037">
    <property type="term" value="F:heme binding"/>
    <property type="evidence" value="ECO:0007669"/>
    <property type="project" value="InterPro"/>
</dbReference>
<dbReference type="GO" id="GO:0005506">
    <property type="term" value="F:iron ion binding"/>
    <property type="evidence" value="ECO:0007669"/>
    <property type="project" value="InterPro"/>
</dbReference>
<dbReference type="GO" id="GO:0043177">
    <property type="term" value="F:organic acid binding"/>
    <property type="evidence" value="ECO:0007669"/>
    <property type="project" value="TreeGrafter"/>
</dbReference>
<dbReference type="GO" id="GO:0019825">
    <property type="term" value="F:oxygen binding"/>
    <property type="evidence" value="ECO:0007669"/>
    <property type="project" value="InterPro"/>
</dbReference>
<dbReference type="GO" id="GO:0005344">
    <property type="term" value="F:oxygen carrier activity"/>
    <property type="evidence" value="ECO:0007669"/>
    <property type="project" value="UniProtKB-KW"/>
</dbReference>
<dbReference type="GO" id="GO:0004601">
    <property type="term" value="F:peroxidase activity"/>
    <property type="evidence" value="ECO:0007669"/>
    <property type="project" value="TreeGrafter"/>
</dbReference>
<dbReference type="GO" id="GO:0042744">
    <property type="term" value="P:hydrogen peroxide catabolic process"/>
    <property type="evidence" value="ECO:0007669"/>
    <property type="project" value="TreeGrafter"/>
</dbReference>
<dbReference type="CDD" id="cd08927">
    <property type="entry name" value="Hb-alpha-like"/>
    <property type="match status" value="1"/>
</dbReference>
<dbReference type="FunFam" id="1.10.490.10:FF:000002">
    <property type="entry name" value="Hemoglobin subunit alpha"/>
    <property type="match status" value="1"/>
</dbReference>
<dbReference type="Gene3D" id="1.10.490.10">
    <property type="entry name" value="Globins"/>
    <property type="match status" value="1"/>
</dbReference>
<dbReference type="InterPro" id="IPR000971">
    <property type="entry name" value="Globin"/>
</dbReference>
<dbReference type="InterPro" id="IPR009050">
    <property type="entry name" value="Globin-like_sf"/>
</dbReference>
<dbReference type="InterPro" id="IPR012292">
    <property type="entry name" value="Globin/Proto"/>
</dbReference>
<dbReference type="InterPro" id="IPR002338">
    <property type="entry name" value="Hemoglobin_a-typ"/>
</dbReference>
<dbReference type="InterPro" id="IPR050056">
    <property type="entry name" value="Hemoglobin_oxygen_transport"/>
</dbReference>
<dbReference type="InterPro" id="IPR002339">
    <property type="entry name" value="Hemoglobin_pi"/>
</dbReference>
<dbReference type="PANTHER" id="PTHR11442">
    <property type="entry name" value="HEMOGLOBIN FAMILY MEMBER"/>
    <property type="match status" value="1"/>
</dbReference>
<dbReference type="PANTHER" id="PTHR11442:SF48">
    <property type="entry name" value="HEMOGLOBIN SUBUNIT ALPHA"/>
    <property type="match status" value="1"/>
</dbReference>
<dbReference type="Pfam" id="PF00042">
    <property type="entry name" value="Globin"/>
    <property type="match status" value="1"/>
</dbReference>
<dbReference type="PRINTS" id="PR00612">
    <property type="entry name" value="ALPHAHAEM"/>
</dbReference>
<dbReference type="PRINTS" id="PR00815">
    <property type="entry name" value="PIHAEM"/>
</dbReference>
<dbReference type="SUPFAM" id="SSF46458">
    <property type="entry name" value="Globin-like"/>
    <property type="match status" value="1"/>
</dbReference>
<dbReference type="PROSITE" id="PS01033">
    <property type="entry name" value="GLOBIN"/>
    <property type="match status" value="1"/>
</dbReference>
<sequence length="141" mass="15233">VLSPADKTNVKAAWAKVGNHAADFGAEALERMFMSFPSTKTYFSHFDLGHNSTQVKGHGKKVADALTKAVGHLDTLPDALSDLSDLHAHKLRVDPVNFKLLSHCLLVTLAAHLPGDFTPSVHASLDKFLASVSTVLTSKYR</sequence>
<gene>
    <name type="primary">HBA</name>
</gene>
<proteinExistence type="evidence at protein level"/>
<name>HBA_PHYMC</name>
<comment type="function">
    <text>Involved in oxygen transport from the lung to the various peripheral tissues.</text>
</comment>
<comment type="function">
    <molecule>Hemopressin</molecule>
    <text evidence="2">Hemopressin acts as an antagonist peptide of the cannabinoid receptor CNR1. Hemopressin-binding efficiently blocks cannabinoid receptor CNR1 and subsequent signaling.</text>
</comment>
<comment type="subunit">
    <text>Heterotetramer of two alpha chains and two beta chains.</text>
</comment>
<comment type="tissue specificity">
    <text>Red blood cells.</text>
</comment>
<comment type="similarity">
    <text evidence="4">Belongs to the globin family.</text>
</comment>
<protein>
    <recommendedName>
        <fullName>Hemoglobin subunit alpha</fullName>
    </recommendedName>
    <alternativeName>
        <fullName>Alpha-globin</fullName>
    </alternativeName>
    <alternativeName>
        <fullName>Hemoglobin alpha chain</fullName>
    </alternativeName>
    <component>
        <recommendedName>
            <fullName evidence="2">Hemopressin</fullName>
        </recommendedName>
    </component>
</protein>